<name>YCF4_HORVU</name>
<gene>
    <name type="primary">ycf4</name>
</gene>
<organism>
    <name type="scientific">Hordeum vulgare</name>
    <name type="common">Barley</name>
    <dbReference type="NCBI Taxonomy" id="4513"/>
    <lineage>
        <taxon>Eukaryota</taxon>
        <taxon>Viridiplantae</taxon>
        <taxon>Streptophyta</taxon>
        <taxon>Embryophyta</taxon>
        <taxon>Tracheophyta</taxon>
        <taxon>Spermatophyta</taxon>
        <taxon>Magnoliopsida</taxon>
        <taxon>Liliopsida</taxon>
        <taxon>Poales</taxon>
        <taxon>Poaceae</taxon>
        <taxon>BOP clade</taxon>
        <taxon>Pooideae</taxon>
        <taxon>Triticodae</taxon>
        <taxon>Triticeae</taxon>
        <taxon>Hordeinae</taxon>
        <taxon>Hordeum</taxon>
    </lineage>
</organism>
<comment type="function">
    <text evidence="1">Seems to be required for the assembly of the photosystem I complex.</text>
</comment>
<comment type="subcellular location">
    <subcellularLocation>
        <location evidence="1">Plastid</location>
        <location evidence="1">Chloroplast thylakoid membrane</location>
        <topology evidence="1">Multi-pass membrane protein</topology>
    </subcellularLocation>
</comment>
<comment type="similarity">
    <text evidence="3">Belongs to the Ycf4 family.</text>
</comment>
<evidence type="ECO:0000250" key="1"/>
<evidence type="ECO:0000255" key="2"/>
<evidence type="ECO:0000305" key="3"/>
<proteinExistence type="inferred from homology"/>
<accession>P20454</accession>
<accession>A1E9K1</accession>
<protein>
    <recommendedName>
        <fullName>Photosystem I assembly protein Ycf4</fullName>
    </recommendedName>
</protein>
<keyword id="KW-0150">Chloroplast</keyword>
<keyword id="KW-0472">Membrane</keyword>
<keyword id="KW-0602">Photosynthesis</keyword>
<keyword id="KW-0934">Plastid</keyword>
<keyword id="KW-0793">Thylakoid</keyword>
<keyword id="KW-0812">Transmembrane</keyword>
<keyword id="KW-1133">Transmembrane helix</keyword>
<reference key="1">
    <citation type="journal article" date="2007" name="Theor. Appl. Genet.">
        <title>Complete chloroplast genome sequences of Hordeum vulgare, Sorghum bicolor and Agrostis stolonifera, and comparative analyses with other grass genomes.</title>
        <authorList>
            <person name="Saski C."/>
            <person name="Lee S.-B."/>
            <person name="Fjellheim S."/>
            <person name="Guda C."/>
            <person name="Jansen R.K."/>
            <person name="Luo H."/>
            <person name="Tomkins J."/>
            <person name="Rognli O.A."/>
            <person name="Daniell H."/>
            <person name="Clarke J.L."/>
        </authorList>
    </citation>
    <scope>NUCLEOTIDE SEQUENCE [LARGE SCALE GENOMIC DNA]</scope>
    <source>
        <strain>cv. Morex</strain>
    </source>
</reference>
<reference key="2">
    <citation type="journal article" date="1989" name="J. Biol. Chem.">
        <title>The primary structure of a 4.0-kDa photosystem I polypeptide encoded by the chloroplast psaI gene.</title>
        <authorList>
            <person name="Scheller H.V."/>
            <person name="Okkels J.S."/>
            <person name="Hoej P.B."/>
            <person name="Svendsen I."/>
            <person name="Roepstorff P."/>
            <person name="Moeller B.L."/>
        </authorList>
    </citation>
    <scope>NUCLEOTIDE SEQUENCE [GENOMIC DNA] OF 1-130</scope>
</reference>
<feature type="chain" id="PRO_0000217608" description="Photosystem I assembly protein Ycf4">
    <location>
        <begin position="1"/>
        <end position="185"/>
    </location>
</feature>
<feature type="transmembrane region" description="Helical" evidence="2">
    <location>
        <begin position="21"/>
        <end position="43"/>
    </location>
</feature>
<feature type="transmembrane region" description="Helical" evidence="2">
    <location>
        <begin position="63"/>
        <end position="85"/>
    </location>
</feature>
<geneLocation type="chloroplast"/>
<sequence>MNWRSEHIWVELLKGSRKRSNFFWACILFLGSLGFLLVGTSSYLGKNIISILPSQEILFFPQGVVMSFYGIAGLFISSYLWCTILWNVGSGYDRFDRKEGIVCIFRWGFPGIKRRVFLRFLMRDIQSIRIQVKEGLYPRRILYMEIRGQGIIPLTRTDDKFFTPREIEQKAAELAYFLRVPIEVF</sequence>
<dbReference type="EMBL" id="EF115541">
    <property type="protein sequence ID" value="ABK79423.1"/>
    <property type="molecule type" value="Genomic_DNA"/>
</dbReference>
<dbReference type="EMBL" id="J05104">
    <property type="protein sequence ID" value="AAA84051.1"/>
    <property type="molecule type" value="Genomic_DNA"/>
</dbReference>
<dbReference type="PIR" id="B34302">
    <property type="entry name" value="B34302"/>
</dbReference>
<dbReference type="RefSeq" id="YP_010144436.1">
    <property type="nucleotide sequence ID" value="NC_056985.1"/>
</dbReference>
<dbReference type="RefSeq" id="YP_874663.1">
    <property type="nucleotide sequence ID" value="NC_008590.1"/>
</dbReference>
<dbReference type="GeneID" id="4525190"/>
<dbReference type="GeneID" id="67140648"/>
<dbReference type="GO" id="GO:0009535">
    <property type="term" value="C:chloroplast thylakoid membrane"/>
    <property type="evidence" value="ECO:0007669"/>
    <property type="project" value="UniProtKB-SubCell"/>
</dbReference>
<dbReference type="GO" id="GO:0009522">
    <property type="term" value="C:photosystem I"/>
    <property type="evidence" value="ECO:0007669"/>
    <property type="project" value="InterPro"/>
</dbReference>
<dbReference type="GO" id="GO:0015979">
    <property type="term" value="P:photosynthesis"/>
    <property type="evidence" value="ECO:0007669"/>
    <property type="project" value="UniProtKB-UniRule"/>
</dbReference>
<dbReference type="HAMAP" id="MF_00437">
    <property type="entry name" value="Ycf4"/>
    <property type="match status" value="1"/>
</dbReference>
<dbReference type="InterPro" id="IPR003359">
    <property type="entry name" value="PSI_Ycf4_assembly"/>
</dbReference>
<dbReference type="PANTHER" id="PTHR33288">
    <property type="match status" value="1"/>
</dbReference>
<dbReference type="PANTHER" id="PTHR33288:SF4">
    <property type="entry name" value="PHOTOSYSTEM I ASSEMBLY PROTEIN YCF4"/>
    <property type="match status" value="1"/>
</dbReference>
<dbReference type="Pfam" id="PF02392">
    <property type="entry name" value="Ycf4"/>
    <property type="match status" value="1"/>
</dbReference>